<dbReference type="EMBL" id="AK315409">
    <property type="protein sequence ID" value="BAG37801.1"/>
    <property type="status" value="ALT_INIT"/>
    <property type="molecule type" value="mRNA"/>
</dbReference>
<dbReference type="EMBL" id="CH471078">
    <property type="protein sequence ID" value="EAW65923.1"/>
    <property type="molecule type" value="Genomic_DNA"/>
</dbReference>
<dbReference type="EMBL" id="CH471078">
    <property type="protein sequence ID" value="EAW65924.1"/>
    <property type="molecule type" value="Genomic_DNA"/>
</dbReference>
<dbReference type="EMBL" id="BC016805">
    <property type="protein sequence ID" value="AAH16805.1"/>
    <property type="status" value="ALT_INIT"/>
    <property type="molecule type" value="mRNA"/>
</dbReference>
<dbReference type="EMBL" id="BC016808">
    <property type="protein sequence ID" value="AAH16808.1"/>
    <property type="status" value="ALT_INIT"/>
    <property type="molecule type" value="mRNA"/>
</dbReference>
<dbReference type="EMBL" id="BC021701">
    <property type="protein sequence ID" value="AAH21701.1"/>
    <property type="status" value="ALT_INIT"/>
    <property type="molecule type" value="mRNA"/>
</dbReference>
<dbReference type="EMBL" id="BC068480">
    <property type="protein sequence ID" value="AAH68480.1"/>
    <property type="status" value="ALT_INIT"/>
    <property type="molecule type" value="mRNA"/>
</dbReference>
<dbReference type="CCDS" id="CCDS9647.2"/>
<dbReference type="RefSeq" id="NP_612145.2">
    <property type="nucleotide sequence ID" value="NM_138288.4"/>
</dbReference>
<dbReference type="PDB" id="6M4N">
    <property type="method" value="EM"/>
    <property type="resolution" value="3.80 A"/>
    <property type="chains" value="D/H=1-71"/>
</dbReference>
<dbReference type="PDB" id="6M4O">
    <property type="method" value="EM"/>
    <property type="resolution" value="3.40 A"/>
    <property type="chains" value="E=1-71"/>
</dbReference>
<dbReference type="PDB" id="7CQI">
    <property type="method" value="EM"/>
    <property type="resolution" value="3.20 A"/>
    <property type="chains" value="E=1-71"/>
</dbReference>
<dbReference type="PDB" id="7CQK">
    <property type="method" value="EM"/>
    <property type="resolution" value="3.30 A"/>
    <property type="chains" value="E=1-71"/>
</dbReference>
<dbReference type="PDB" id="7K0I">
    <property type="method" value="EM"/>
    <property type="resolution" value="3.30 A"/>
    <property type="chains" value="C/F=1-71"/>
</dbReference>
<dbReference type="PDB" id="7K0J">
    <property type="method" value="EM"/>
    <property type="resolution" value="3.10 A"/>
    <property type="chains" value="C=1-71"/>
</dbReference>
<dbReference type="PDB" id="7K0K">
    <property type="method" value="EM"/>
    <property type="resolution" value="2.60 A"/>
    <property type="chains" value="C=1-71"/>
</dbReference>
<dbReference type="PDB" id="7K0L">
    <property type="method" value="EM"/>
    <property type="resolution" value="3.40 A"/>
    <property type="chains" value="C=1-71"/>
</dbReference>
<dbReference type="PDB" id="7K0M">
    <property type="method" value="EM"/>
    <property type="resolution" value="2.90 A"/>
    <property type="chains" value="C/G=1-71"/>
</dbReference>
<dbReference type="PDB" id="7K0N">
    <property type="method" value="EM"/>
    <property type="resolution" value="3.10 A"/>
    <property type="chains" value="C/G=1-71"/>
</dbReference>
<dbReference type="PDB" id="7K0O">
    <property type="method" value="EM"/>
    <property type="resolution" value="3.10 A"/>
    <property type="chains" value="C/G=1-71"/>
</dbReference>
<dbReference type="PDB" id="7K0P">
    <property type="method" value="EM"/>
    <property type="resolution" value="3.10 A"/>
    <property type="chains" value="C/G=1-71"/>
</dbReference>
<dbReference type="PDB" id="7K0Q">
    <property type="method" value="EM"/>
    <property type="resolution" value="3.30 A"/>
    <property type="chains" value="C=1-71"/>
</dbReference>
<dbReference type="PDB" id="7YIU">
    <property type="method" value="EM"/>
    <property type="resolution" value="2.90 A"/>
    <property type="chains" value="C=1-71"/>
</dbReference>
<dbReference type="PDB" id="7YIY">
    <property type="method" value="EM"/>
    <property type="resolution" value="2.70 A"/>
    <property type="chains" value="C=1-71"/>
</dbReference>
<dbReference type="PDB" id="7YJ1">
    <property type="method" value="EM"/>
    <property type="resolution" value="3.10 A"/>
    <property type="chains" value="C=1-71"/>
</dbReference>
<dbReference type="PDB" id="7YJ2">
    <property type="method" value="EM"/>
    <property type="resolution" value="2.90 A"/>
    <property type="chains" value="C=1-71"/>
</dbReference>
<dbReference type="PDBsum" id="6M4N"/>
<dbReference type="PDBsum" id="6M4O"/>
<dbReference type="PDBsum" id="7CQI"/>
<dbReference type="PDBsum" id="7CQK"/>
<dbReference type="PDBsum" id="7K0I"/>
<dbReference type="PDBsum" id="7K0J"/>
<dbReference type="PDBsum" id="7K0K"/>
<dbReference type="PDBsum" id="7K0L"/>
<dbReference type="PDBsum" id="7K0M"/>
<dbReference type="PDBsum" id="7K0N"/>
<dbReference type="PDBsum" id="7K0O"/>
<dbReference type="PDBsum" id="7K0P"/>
<dbReference type="PDBsum" id="7K0Q"/>
<dbReference type="PDBsum" id="7YIU"/>
<dbReference type="PDBsum" id="7YIY"/>
<dbReference type="PDBsum" id="7YJ1"/>
<dbReference type="PDBsum" id="7YJ2"/>
<dbReference type="EMDB" id="EMD-22598"/>
<dbReference type="EMDB" id="EMD-22599"/>
<dbReference type="EMDB" id="EMD-22600"/>
<dbReference type="EMDB" id="EMD-22601"/>
<dbReference type="EMDB" id="EMD-22602"/>
<dbReference type="EMDB" id="EMD-22604"/>
<dbReference type="EMDB" id="EMD-22605"/>
<dbReference type="EMDB" id="EMD-22606"/>
<dbReference type="EMDB" id="EMD-22608"/>
<dbReference type="EMDB" id="EMD-30079"/>
<dbReference type="EMDB" id="EMD-30080"/>
<dbReference type="EMDB" id="EMD-30441"/>
<dbReference type="EMDB" id="EMD-30442"/>
<dbReference type="EMDB" id="EMD-33864"/>
<dbReference type="EMDB" id="EMD-33866"/>
<dbReference type="EMDB" id="EMD-33868"/>
<dbReference type="EMDB" id="EMD-33869"/>
<dbReference type="SMR" id="Q969W0"/>
<dbReference type="BioGRID" id="128143">
    <property type="interactions" value="14"/>
</dbReference>
<dbReference type="ComplexPortal" id="CPX-6663">
    <property type="entry name" value="Serine palmitoyltransferase complex, SPTLC1-SPTLC2-SPTSSA variant"/>
</dbReference>
<dbReference type="ComplexPortal" id="CPX-6665">
    <property type="entry name" value="Serine palmitoyltransferase complex, SPTLC1-SPTLC3-SPTSSA variant"/>
</dbReference>
<dbReference type="CORUM" id="Q969W0"/>
<dbReference type="DIP" id="DIP-60754N"/>
<dbReference type="FunCoup" id="Q969W0">
    <property type="interactions" value="608"/>
</dbReference>
<dbReference type="IntAct" id="Q969W0">
    <property type="interactions" value="9"/>
</dbReference>
<dbReference type="STRING" id="9606.ENSP00000298130"/>
<dbReference type="BioMuta" id="SPTSSA"/>
<dbReference type="DMDM" id="238054261"/>
<dbReference type="PaxDb" id="9606-ENSP00000298130"/>
<dbReference type="PeptideAtlas" id="Q969W0"/>
<dbReference type="ProteomicsDB" id="75855"/>
<dbReference type="TopDownProteomics" id="Q969W0"/>
<dbReference type="DNASU" id="171546"/>
<dbReference type="Ensembl" id="ENST00000298130.5">
    <property type="protein sequence ID" value="ENSP00000298130.4"/>
    <property type="gene ID" value="ENSG00000165389.7"/>
</dbReference>
<dbReference type="GeneID" id="171546"/>
<dbReference type="KEGG" id="hsa:171546"/>
<dbReference type="MANE-Select" id="ENST00000298130.5">
    <property type="protein sequence ID" value="ENSP00000298130.4"/>
    <property type="RefSeq nucleotide sequence ID" value="NM_138288.4"/>
    <property type="RefSeq protein sequence ID" value="NP_612145.2"/>
</dbReference>
<dbReference type="UCSC" id="uc001wsc.4">
    <property type="organism name" value="human"/>
</dbReference>
<dbReference type="AGR" id="HGNC:20361"/>
<dbReference type="CTD" id="171546"/>
<dbReference type="DisGeNET" id="171546"/>
<dbReference type="GeneCards" id="SPTSSA"/>
<dbReference type="HGNC" id="HGNC:20361">
    <property type="gene designation" value="SPTSSA"/>
</dbReference>
<dbReference type="HPA" id="ENSG00000165389">
    <property type="expression patterns" value="Low tissue specificity"/>
</dbReference>
<dbReference type="MalaCards" id="SPTSSA"/>
<dbReference type="MIM" id="613540">
    <property type="type" value="gene"/>
</dbReference>
<dbReference type="MIM" id="620416">
    <property type="type" value="phenotype"/>
</dbReference>
<dbReference type="MIM" id="620417">
    <property type="type" value="phenotype"/>
</dbReference>
<dbReference type="neXtProt" id="NX_Q969W0"/>
<dbReference type="OpenTargets" id="ENSG00000165389"/>
<dbReference type="PharmGKB" id="PA128394765"/>
<dbReference type="VEuPathDB" id="HostDB:ENSG00000165389"/>
<dbReference type="eggNOG" id="ENOG502S4Q3">
    <property type="taxonomic scope" value="Eukaryota"/>
</dbReference>
<dbReference type="GeneTree" id="ENSGT00390000002766"/>
<dbReference type="HOGENOM" id="CLU_187811_1_0_1"/>
<dbReference type="InParanoid" id="Q969W0"/>
<dbReference type="OMA" id="LEPVERW"/>
<dbReference type="OrthoDB" id="202672at2759"/>
<dbReference type="PAN-GO" id="Q969W0">
    <property type="GO annotations" value="3 GO annotations based on evolutionary models"/>
</dbReference>
<dbReference type="PhylomeDB" id="Q969W0"/>
<dbReference type="TreeFam" id="TF328418"/>
<dbReference type="BioCyc" id="MetaCyc:MONOMER66-34371"/>
<dbReference type="BRENDA" id="2.3.1.50">
    <property type="organism ID" value="2681"/>
</dbReference>
<dbReference type="PathwayCommons" id="Q969W0"/>
<dbReference type="Reactome" id="R-HSA-1660661">
    <property type="pathway name" value="Sphingolipid de novo biosynthesis"/>
</dbReference>
<dbReference type="SABIO-RK" id="Q969W0"/>
<dbReference type="SignaLink" id="Q969W0"/>
<dbReference type="UniPathway" id="UPA00222"/>
<dbReference type="BioGRID-ORCS" id="171546">
    <property type="hits" value="219 hits in 1160 CRISPR screens"/>
</dbReference>
<dbReference type="ChiTaRS" id="SPTSSA">
    <property type="organism name" value="human"/>
</dbReference>
<dbReference type="GenomeRNAi" id="171546"/>
<dbReference type="Pharos" id="Q969W0">
    <property type="development level" value="Tbio"/>
</dbReference>
<dbReference type="PRO" id="PR:Q969W0"/>
<dbReference type="Proteomes" id="UP000005640">
    <property type="component" value="Chromosome 14"/>
</dbReference>
<dbReference type="RNAct" id="Q969W0">
    <property type="molecule type" value="protein"/>
</dbReference>
<dbReference type="Bgee" id="ENSG00000165389">
    <property type="expression patterns" value="Expressed in mucosa of sigmoid colon and 213 other cell types or tissues"/>
</dbReference>
<dbReference type="GO" id="GO:0005783">
    <property type="term" value="C:endoplasmic reticulum"/>
    <property type="evidence" value="ECO:0000314"/>
    <property type="project" value="UniProtKB"/>
</dbReference>
<dbReference type="GO" id="GO:0005789">
    <property type="term" value="C:endoplasmic reticulum membrane"/>
    <property type="evidence" value="ECO:0000304"/>
    <property type="project" value="Reactome"/>
</dbReference>
<dbReference type="GO" id="GO:0017059">
    <property type="term" value="C:serine palmitoyltransferase complex"/>
    <property type="evidence" value="ECO:0000314"/>
    <property type="project" value="UniProtKB"/>
</dbReference>
<dbReference type="GO" id="GO:0004758">
    <property type="term" value="F:serine C-palmitoyltransferase activity"/>
    <property type="evidence" value="ECO:0000314"/>
    <property type="project" value="MGI"/>
</dbReference>
<dbReference type="GO" id="GO:0046513">
    <property type="term" value="P:ceramide biosynthetic process"/>
    <property type="evidence" value="ECO:0000314"/>
    <property type="project" value="MGI"/>
</dbReference>
<dbReference type="GO" id="GO:0008104">
    <property type="term" value="P:protein localization"/>
    <property type="evidence" value="ECO:0000314"/>
    <property type="project" value="UniProtKB"/>
</dbReference>
<dbReference type="GO" id="GO:0030148">
    <property type="term" value="P:sphingolipid biosynthetic process"/>
    <property type="evidence" value="ECO:0000304"/>
    <property type="project" value="UniProtKB"/>
</dbReference>
<dbReference type="GO" id="GO:0046512">
    <property type="term" value="P:sphingosine biosynthetic process"/>
    <property type="evidence" value="ECO:0000314"/>
    <property type="project" value="ComplexPortal"/>
</dbReference>
<dbReference type="InterPro" id="IPR024512">
    <property type="entry name" value="Ser_palmitoyltrfase_ssu-like"/>
</dbReference>
<dbReference type="InterPro" id="IPR051900">
    <property type="entry name" value="SPT_small_subunit"/>
</dbReference>
<dbReference type="PANTHER" id="PTHR47084">
    <property type="entry name" value="SERINE PALMITOYLTRANSFERASE SMALL SUBUNIT A"/>
    <property type="match status" value="1"/>
</dbReference>
<dbReference type="PANTHER" id="PTHR47084:SF1">
    <property type="entry name" value="SERINE PALMITOYLTRANSFERASE SMALL SUBUNIT A"/>
    <property type="match status" value="1"/>
</dbReference>
<dbReference type="Pfam" id="PF11779">
    <property type="entry name" value="SPT_ssu-like"/>
    <property type="match status" value="1"/>
</dbReference>
<sequence>MAGMALARAWKQMSWFYYQYLLVTALYMLEPWERTVFNSMLVSIVGMALYTGYVFMPQHIMAILHYFEIVQ</sequence>
<keyword id="KW-0002">3D-structure</keyword>
<keyword id="KW-0225">Disease variant</keyword>
<keyword id="KW-0256">Endoplasmic reticulum</keyword>
<keyword id="KW-0890">Hereditary spastic paraplegia</keyword>
<keyword id="KW-0443">Lipid metabolism</keyword>
<keyword id="KW-0472">Membrane</keyword>
<keyword id="KW-0523">Neurodegeneration</keyword>
<keyword id="KW-1267">Proteomics identification</keyword>
<keyword id="KW-1185">Reference proteome</keyword>
<keyword id="KW-0746">Sphingolipid metabolism</keyword>
<keyword id="KW-0812">Transmembrane</keyword>
<keyword id="KW-1133">Transmembrane helix</keyword>
<accession>Q969W0</accession>
<accession>B2RD54</accession>
<accession>D3DS93</accession>
<accession>Q8WTZ7</accession>
<feature type="chain" id="PRO_0000089949" description="Serine palmitoyltransferase small subunit A">
    <location>
        <begin position="1"/>
        <end position="71"/>
    </location>
</feature>
<feature type="topological domain" description="Cytoplasmic" evidence="1">
    <location>
        <begin position="1"/>
        <end position="12"/>
    </location>
</feature>
<feature type="transmembrane region" description="Helical" evidence="1">
    <location>
        <begin position="13"/>
        <end position="29"/>
    </location>
</feature>
<feature type="topological domain" description="Lumenal" evidence="1">
    <location>
        <begin position="30"/>
        <end position="34"/>
    </location>
</feature>
<feature type="transmembrane region" description="Helical" evidence="1">
    <location>
        <begin position="35"/>
        <end position="57"/>
    </location>
</feature>
<feature type="topological domain" description="Cytoplasmic" evidence="1">
    <location>
        <begin position="58"/>
        <end position="71"/>
    </location>
</feature>
<feature type="site" description="Within the serine palmitoyltransferase (SPT) complex, defines the length of the acyl chain-binding pocket, determining the acyl-CoA substrate preference">
    <location>
        <position position="28"/>
    </location>
</feature>
<feature type="sequence variant" id="VAR_088800" description="In SPG90A; likely pathogenic; results in increased sphingolipid biosynthetic process due to impaired down-regulation of serine palmitoyltransferase (SPT) complex activity by ORMDL3." evidence="6">
    <original>T</original>
    <variation>I</variation>
    <location>
        <position position="51"/>
    </location>
</feature>
<feature type="mutagenesis site" description="Within the serine palmitoyltransferase (SPT) complex, leads to a strong decrease in SPT catalytic activity with L-serine and palmitoyl-CoA as substrates." evidence="5">
    <original>M</original>
    <variation>K</variation>
    <location>
        <position position="28"/>
    </location>
</feature>
<feature type="mutagenesis site" description="Impaired down-regulation of SPT complex activity by ORMDL3." evidence="6">
    <original>H</original>
    <variation>L</variation>
    <location>
        <position position="59"/>
    </location>
</feature>
<feature type="sequence conflict" description="In Ref. 3; AAH21701." evidence="8" ref="3">
    <original>M</original>
    <variation>V</variation>
    <location>
        <position position="56"/>
    </location>
</feature>
<feature type="helix" evidence="27">
    <location>
        <begin position="9"/>
        <end position="23"/>
    </location>
</feature>
<feature type="helix" evidence="27">
    <location>
        <begin position="26"/>
        <end position="28"/>
    </location>
</feature>
<feature type="helix" evidence="27">
    <location>
        <begin position="31"/>
        <end position="55"/>
    </location>
</feature>
<feature type="helix" evidence="28">
    <location>
        <begin position="59"/>
        <end position="68"/>
    </location>
</feature>
<gene>
    <name evidence="9" type="primary">SPTSSA</name>
    <name type="synonym">C14orf147</name>
    <name type="synonym">SSSPTA</name>
</gene>
<organism>
    <name type="scientific">Homo sapiens</name>
    <name type="common">Human</name>
    <dbReference type="NCBI Taxonomy" id="9606"/>
    <lineage>
        <taxon>Eukaryota</taxon>
        <taxon>Metazoa</taxon>
        <taxon>Chordata</taxon>
        <taxon>Craniata</taxon>
        <taxon>Vertebrata</taxon>
        <taxon>Euteleostomi</taxon>
        <taxon>Mammalia</taxon>
        <taxon>Eutheria</taxon>
        <taxon>Euarchontoglires</taxon>
        <taxon>Primates</taxon>
        <taxon>Haplorrhini</taxon>
        <taxon>Catarrhini</taxon>
        <taxon>Hominidae</taxon>
        <taxon>Homo</taxon>
    </lineage>
</organism>
<protein>
    <recommendedName>
        <fullName evidence="8">Serine palmitoyltransferase small subunit A</fullName>
    </recommendedName>
    <alternativeName>
        <fullName>Small subunit of serine palmitoyltransferase A</fullName>
        <shortName>ssSPTa</shortName>
    </alternativeName>
</protein>
<proteinExistence type="evidence at protein level"/>
<evidence type="ECO:0000255" key="1"/>
<evidence type="ECO:0000269" key="2">
    <source>
    </source>
</evidence>
<evidence type="ECO:0000269" key="3">
    <source>
    </source>
</evidence>
<evidence type="ECO:0000269" key="4">
    <source>
    </source>
</evidence>
<evidence type="ECO:0000269" key="5">
    <source>
    </source>
</evidence>
<evidence type="ECO:0000269" key="6">
    <source>
    </source>
</evidence>
<evidence type="ECO:0000269" key="7">
    <source>
    </source>
</evidence>
<evidence type="ECO:0000305" key="8"/>
<evidence type="ECO:0000312" key="9">
    <source>
        <dbReference type="HGNC" id="HGNC:20361"/>
    </source>
</evidence>
<evidence type="ECO:0007744" key="10">
    <source>
        <dbReference type="PDB" id="6M4N"/>
    </source>
</evidence>
<evidence type="ECO:0007744" key="11">
    <source>
        <dbReference type="PDB" id="6M4O"/>
    </source>
</evidence>
<evidence type="ECO:0007744" key="12">
    <source>
        <dbReference type="PDB" id="7CQI"/>
    </source>
</evidence>
<evidence type="ECO:0007744" key="13">
    <source>
        <dbReference type="PDB" id="7CQK"/>
    </source>
</evidence>
<evidence type="ECO:0007744" key="14">
    <source>
        <dbReference type="PDB" id="7K0I"/>
    </source>
</evidence>
<evidence type="ECO:0007744" key="15">
    <source>
        <dbReference type="PDB" id="7K0J"/>
    </source>
</evidence>
<evidence type="ECO:0007744" key="16">
    <source>
        <dbReference type="PDB" id="7K0K"/>
    </source>
</evidence>
<evidence type="ECO:0007744" key="17">
    <source>
        <dbReference type="PDB" id="7K0L"/>
    </source>
</evidence>
<evidence type="ECO:0007744" key="18">
    <source>
        <dbReference type="PDB" id="7K0M"/>
    </source>
</evidence>
<evidence type="ECO:0007744" key="19">
    <source>
        <dbReference type="PDB" id="7K0N"/>
    </source>
</evidence>
<evidence type="ECO:0007744" key="20">
    <source>
        <dbReference type="PDB" id="7K0O"/>
    </source>
</evidence>
<evidence type="ECO:0007744" key="21">
    <source>
        <dbReference type="PDB" id="7K0P"/>
    </source>
</evidence>
<evidence type="ECO:0007744" key="22">
    <source>
        <dbReference type="PDB" id="7K0Q"/>
    </source>
</evidence>
<evidence type="ECO:0007744" key="23">
    <source>
        <dbReference type="PDB" id="7YIU"/>
    </source>
</evidence>
<evidence type="ECO:0007744" key="24">
    <source>
        <dbReference type="PDB" id="7YIY"/>
    </source>
</evidence>
<evidence type="ECO:0007744" key="25">
    <source>
        <dbReference type="PDB" id="7YJ1"/>
    </source>
</evidence>
<evidence type="ECO:0007744" key="26">
    <source>
        <dbReference type="PDB" id="7YJ2"/>
    </source>
</evidence>
<evidence type="ECO:0007829" key="27">
    <source>
        <dbReference type="PDB" id="7K0K"/>
    </source>
</evidence>
<evidence type="ECO:0007829" key="28">
    <source>
        <dbReference type="PDB" id="7K0M"/>
    </source>
</evidence>
<comment type="function">
    <text evidence="2 3 4">Component of the serine palmitoyltransferase multisubunit enzyme (SPT) that catalyzes the initial and rate-limiting step in sphingolipid biosynthesis by condensing L-serine and activated acyl-CoA (most commonly palmitoyl-CoA) to form long-chain bases (PubMed:19416851). The SPT complex is composed of SPTLC1, SPTLC2 or SPTLC3 and SPTSSA or SPTSSB. Within this complex, the heterodimer consisting of SPTLC1 and SPTLC2/SPTLC3 forms the catalytic core (PubMed:19416851). Within the SPT complex, SPTSSA stimulates the catalytic activity and plays a role in substrate specificity, which depends upon the overall complex composition (PubMed:19416851, PubMed:33558761). The SPTLC1-SPTLC2-SPTSSA complex shows a strong preference for C16-CoA substrate, while the SPTLC1-SPTLC3-SPTSSA isozyme uses both C14-CoA and C16-CoA as substrates, with a slight preference for C14-CoA (PubMed:19416851). Independently of its action as a SPT component, may be involved in MBOAT7 localization to mitochondria-associated membranes, a membrane bridge between the endoplasmic reticulum and mitochondria, may hence affect MBOAT7-catalyzed incorporation of arachidonic acid into phosphatidylinositol (PubMed:23510452).</text>
</comment>
<comment type="pathway">
    <text>Lipid metabolism; sphingolipid metabolism.</text>
</comment>
<comment type="subunit">
    <text evidence="2 3 4 5 7">Component of the serine palmitoyltransferase (SPT) complex, which is composed of SPTLC1, SPTLC2 or SPTLC3 and SPTSSA or SPTSSB (PubMed:19416851, PubMed:33558761, PubMed:33558762, PubMed:37308477). The heterodimer consisting of SPTLC1 and SPTLC2/SPTLC3 forms the catalytic core of the enzyme, while SPTSSA or SPTSSB subunits determine substrate specificity (PubMed:33558762, PubMed:37308477). SPT also interacts with ORMDL proteins, especially ORMDL3, which negatively regulate SPT activity in the presence of ceramides (PubMed:33558762, PubMed:37308477). Interacts with MBOAT7; the interaction plays a role in MBOAT7 localization to mitochondria-associated membranes (PubMed:23510452).</text>
</comment>
<comment type="interaction">
    <interactant intactId="EBI-723396">
        <id>Q969W0</id>
    </interactant>
    <interactant intactId="EBI-3867333">
        <id>A8MQ03</id>
        <label>CYSRT1</label>
    </interactant>
    <organismsDiffer>false</organismsDiffer>
    <experiments>3</experiments>
</comment>
<comment type="interaction">
    <interactant intactId="EBI-723396">
        <id>Q969W0</id>
    </interactant>
    <interactant intactId="EBI-18908258">
        <id>O00258</id>
        <label>GET1</label>
    </interactant>
    <organismsDiffer>false</organismsDiffer>
    <experiments>3</experiments>
</comment>
<comment type="interaction">
    <interactant intactId="EBI-723396">
        <id>Q969W0</id>
    </interactant>
    <interactant intactId="EBI-2868124">
        <id>Q9BSE4</id>
        <label>HERPUD2</label>
    </interactant>
    <organismsDiffer>false</organismsDiffer>
    <experiments>3</experiments>
</comment>
<comment type="interaction">
    <interactant intactId="EBI-723396">
        <id>Q969W0</id>
    </interactant>
    <interactant intactId="EBI-12104986">
        <id>O75783</id>
        <label>RHBDL1</label>
    </interactant>
    <organismsDiffer>false</organismsDiffer>
    <experiments>3</experiments>
</comment>
<comment type="subcellular location">
    <subcellularLocation>
        <location evidence="3">Endoplasmic reticulum membrane</location>
        <topology evidence="1">Multi-pass membrane protein</topology>
    </subcellularLocation>
</comment>
<comment type="disease" evidence="6">
    <disease id="DI-06702">
        <name>Spastic paraplegia 90A, autosomal dominant</name>
        <acronym>SPG90A</acronym>
        <description>A form of spastic paraplegia, a neurodegenerative disorder characterized by a slow, gradual, progressive weakness and spasticity of the lower limbs. Rate of progression and the severity of symptoms are quite variable. Initial symptoms may include difficulty with balance, weakness and stiffness in the legs, muscle spasms, and dragging the toes when walking. In some forms of the disorder, bladder symptoms (such as incontinence) may appear, or weakness and stiffness may spread to other parts of the body. SPG90A affected individuals have motor impairment and progressive lower extremity spasticity as well as neurologic findings, cognitive impairment, and hearing loss.</description>
        <dbReference type="MIM" id="620416"/>
    </disease>
    <text>The disease may be caused by variants affecting the gene represented in this entry.</text>
</comment>
<comment type="disease" evidence="6">
    <disease id="DI-06703">
        <name>Spastic paraplegia 90B, autosomal recessive</name>
        <acronym>SPG90B</acronym>
        <description>A form of spastic paraplegia, a neurodegenerative disorder characterized by a slow, gradual, progressive weakness and spasticity of the lower limbs. Rate of progression and the severity of symptoms are quite variable. Initial symptoms may include difficulty with balance, weakness and stiffness in the legs, muscle spasms, and dragging the toes when walking. In some forms of the disorder, bladder symptoms (such as incontinence) may appear, or weakness and stiffness may spread to other parts of the body. SPG90B is an autosomal recessive form characterized by motor impairment and progressive lower extremity spasticity as well as neurologic findings, cognitive impairment, and hearing loss.</description>
        <dbReference type="MIM" id="620417"/>
    </disease>
    <text>The disease may be caused by variants affecting the gene represented in this entry.</text>
</comment>
<comment type="similarity">
    <text evidence="8">Belongs to the SPTSS family. SPTSSA subfamily.</text>
</comment>
<comment type="caution">
    <text evidence="8">It is uncertain whether Met-1 or Met-4 is the initiator.</text>
</comment>
<comment type="sequence caution" evidence="8">
    <conflict type="erroneous initiation">
        <sequence resource="EMBL-CDS" id="AAH16805"/>
    </conflict>
    <text>Truncated N-terminus.</text>
</comment>
<comment type="sequence caution" evidence="8">
    <conflict type="erroneous initiation">
        <sequence resource="EMBL-CDS" id="AAH16808"/>
    </conflict>
    <text>Truncated N-terminus.</text>
</comment>
<comment type="sequence caution" evidence="8">
    <conflict type="erroneous initiation">
        <sequence resource="EMBL-CDS" id="AAH21701"/>
    </conflict>
    <text>Truncated N-terminus.</text>
</comment>
<comment type="sequence caution" evidence="8">
    <conflict type="erroneous initiation">
        <sequence resource="EMBL-CDS" id="AAH68480"/>
    </conflict>
    <text>Truncated N-terminus.</text>
</comment>
<comment type="sequence caution" evidence="8">
    <conflict type="erroneous initiation">
        <sequence resource="EMBL-CDS" id="BAG37801"/>
    </conflict>
    <text>Truncated N-terminus.</text>
</comment>
<name>SPTSA_HUMAN</name>
<reference key="1">
    <citation type="journal article" date="2004" name="Nat. Genet.">
        <title>Complete sequencing and characterization of 21,243 full-length human cDNAs.</title>
        <authorList>
            <person name="Ota T."/>
            <person name="Suzuki Y."/>
            <person name="Nishikawa T."/>
            <person name="Otsuki T."/>
            <person name="Sugiyama T."/>
            <person name="Irie R."/>
            <person name="Wakamatsu A."/>
            <person name="Hayashi K."/>
            <person name="Sato H."/>
            <person name="Nagai K."/>
            <person name="Kimura K."/>
            <person name="Makita H."/>
            <person name="Sekine M."/>
            <person name="Obayashi M."/>
            <person name="Nishi T."/>
            <person name="Shibahara T."/>
            <person name="Tanaka T."/>
            <person name="Ishii S."/>
            <person name="Yamamoto J."/>
            <person name="Saito K."/>
            <person name="Kawai Y."/>
            <person name="Isono Y."/>
            <person name="Nakamura Y."/>
            <person name="Nagahari K."/>
            <person name="Murakami K."/>
            <person name="Yasuda T."/>
            <person name="Iwayanagi T."/>
            <person name="Wagatsuma M."/>
            <person name="Shiratori A."/>
            <person name="Sudo H."/>
            <person name="Hosoiri T."/>
            <person name="Kaku Y."/>
            <person name="Kodaira H."/>
            <person name="Kondo H."/>
            <person name="Sugawara M."/>
            <person name="Takahashi M."/>
            <person name="Kanda K."/>
            <person name="Yokoi T."/>
            <person name="Furuya T."/>
            <person name="Kikkawa E."/>
            <person name="Omura Y."/>
            <person name="Abe K."/>
            <person name="Kamihara K."/>
            <person name="Katsuta N."/>
            <person name="Sato K."/>
            <person name="Tanikawa M."/>
            <person name="Yamazaki M."/>
            <person name="Ninomiya K."/>
            <person name="Ishibashi T."/>
            <person name="Yamashita H."/>
            <person name="Murakawa K."/>
            <person name="Fujimori K."/>
            <person name="Tanai H."/>
            <person name="Kimata M."/>
            <person name="Watanabe M."/>
            <person name="Hiraoka S."/>
            <person name="Chiba Y."/>
            <person name="Ishida S."/>
            <person name="Ono Y."/>
            <person name="Takiguchi S."/>
            <person name="Watanabe S."/>
            <person name="Yosida M."/>
            <person name="Hotuta T."/>
            <person name="Kusano J."/>
            <person name="Kanehori K."/>
            <person name="Takahashi-Fujii A."/>
            <person name="Hara H."/>
            <person name="Tanase T.-O."/>
            <person name="Nomura Y."/>
            <person name="Togiya S."/>
            <person name="Komai F."/>
            <person name="Hara R."/>
            <person name="Takeuchi K."/>
            <person name="Arita M."/>
            <person name="Imose N."/>
            <person name="Musashino K."/>
            <person name="Yuuki H."/>
            <person name="Oshima A."/>
            <person name="Sasaki N."/>
            <person name="Aotsuka S."/>
            <person name="Yoshikawa Y."/>
            <person name="Matsunawa H."/>
            <person name="Ichihara T."/>
            <person name="Shiohata N."/>
            <person name="Sano S."/>
            <person name="Moriya S."/>
            <person name="Momiyama H."/>
            <person name="Satoh N."/>
            <person name="Takami S."/>
            <person name="Terashima Y."/>
            <person name="Suzuki O."/>
            <person name="Nakagawa S."/>
            <person name="Senoh A."/>
            <person name="Mizoguchi H."/>
            <person name="Goto Y."/>
            <person name="Shimizu F."/>
            <person name="Wakebe H."/>
            <person name="Hishigaki H."/>
            <person name="Watanabe T."/>
            <person name="Sugiyama A."/>
            <person name="Takemoto M."/>
            <person name="Kawakami B."/>
            <person name="Yamazaki M."/>
            <person name="Watanabe K."/>
            <person name="Kumagai A."/>
            <person name="Itakura S."/>
            <person name="Fukuzumi Y."/>
            <person name="Fujimori Y."/>
            <person name="Komiyama M."/>
            <person name="Tashiro H."/>
            <person name="Tanigami A."/>
            <person name="Fujiwara T."/>
            <person name="Ono T."/>
            <person name="Yamada K."/>
            <person name="Fujii Y."/>
            <person name="Ozaki K."/>
            <person name="Hirao M."/>
            <person name="Ohmori Y."/>
            <person name="Kawabata A."/>
            <person name="Hikiji T."/>
            <person name="Kobatake N."/>
            <person name="Inagaki H."/>
            <person name="Ikema Y."/>
            <person name="Okamoto S."/>
            <person name="Okitani R."/>
            <person name="Kawakami T."/>
            <person name="Noguchi S."/>
            <person name="Itoh T."/>
            <person name="Shigeta K."/>
            <person name="Senba T."/>
            <person name="Matsumura K."/>
            <person name="Nakajima Y."/>
            <person name="Mizuno T."/>
            <person name="Morinaga M."/>
            <person name="Sasaki M."/>
            <person name="Togashi T."/>
            <person name="Oyama M."/>
            <person name="Hata H."/>
            <person name="Watanabe M."/>
            <person name="Komatsu T."/>
            <person name="Mizushima-Sugano J."/>
            <person name="Satoh T."/>
            <person name="Shirai Y."/>
            <person name="Takahashi Y."/>
            <person name="Nakagawa K."/>
            <person name="Okumura K."/>
            <person name="Nagase T."/>
            <person name="Nomura N."/>
            <person name="Kikuchi H."/>
            <person name="Masuho Y."/>
            <person name="Yamashita R."/>
            <person name="Nakai K."/>
            <person name="Yada T."/>
            <person name="Nakamura Y."/>
            <person name="Ohara O."/>
            <person name="Isogai T."/>
            <person name="Sugano S."/>
        </authorList>
    </citation>
    <scope>NUCLEOTIDE SEQUENCE [LARGE SCALE MRNA]</scope>
    <source>
        <tissue>Tongue</tissue>
    </source>
</reference>
<reference key="2">
    <citation type="submission" date="2005-09" db="EMBL/GenBank/DDBJ databases">
        <authorList>
            <person name="Mural R.J."/>
            <person name="Istrail S."/>
            <person name="Sutton G.G."/>
            <person name="Florea L."/>
            <person name="Halpern A.L."/>
            <person name="Mobarry C.M."/>
            <person name="Lippert R."/>
            <person name="Walenz B."/>
            <person name="Shatkay H."/>
            <person name="Dew I."/>
            <person name="Miller J.R."/>
            <person name="Flanigan M.J."/>
            <person name="Edwards N.J."/>
            <person name="Bolanos R."/>
            <person name="Fasulo D."/>
            <person name="Halldorsson B.V."/>
            <person name="Hannenhalli S."/>
            <person name="Turner R."/>
            <person name="Yooseph S."/>
            <person name="Lu F."/>
            <person name="Nusskern D.R."/>
            <person name="Shue B.C."/>
            <person name="Zheng X.H."/>
            <person name="Zhong F."/>
            <person name="Delcher A.L."/>
            <person name="Huson D.H."/>
            <person name="Kravitz S.A."/>
            <person name="Mouchard L."/>
            <person name="Reinert K."/>
            <person name="Remington K.A."/>
            <person name="Clark A.G."/>
            <person name="Waterman M.S."/>
            <person name="Eichler E.E."/>
            <person name="Adams M.D."/>
            <person name="Hunkapiller M.W."/>
            <person name="Myers E.W."/>
            <person name="Venter J.C."/>
        </authorList>
    </citation>
    <scope>NUCLEOTIDE SEQUENCE [LARGE SCALE GENOMIC DNA]</scope>
</reference>
<reference key="3">
    <citation type="journal article" date="2004" name="Genome Res.">
        <title>The status, quality, and expansion of the NIH full-length cDNA project: the Mammalian Gene Collection (MGC).</title>
        <authorList>
            <consortium name="The MGC Project Team"/>
        </authorList>
    </citation>
    <scope>NUCLEOTIDE SEQUENCE [LARGE SCALE MRNA]</scope>
    <source>
        <tissue>Bone marrow</tissue>
        <tissue>Brain</tissue>
        <tissue>Kidney</tissue>
    </source>
</reference>
<reference key="4">
    <citation type="journal article" date="2009" name="Proc. Natl. Acad. Sci. U.S.A.">
        <title>Identification of small subunits of mammalian serine palmitoyltransferase that confer distinct acyl-CoA substrate specificities.</title>
        <authorList>
            <person name="Han G."/>
            <person name="Gupta S.D."/>
            <person name="Gable K."/>
            <person name="Niranjanakumari S."/>
            <person name="Moitra P."/>
            <person name="Eichler F."/>
            <person name="Brown R.H. Jr."/>
            <person name="Harmon J.M."/>
            <person name="Dunn T.M."/>
        </authorList>
    </citation>
    <scope>FUNCTION</scope>
    <scope>TOPOLOGY</scope>
    <scope>IDENTIFICATION IN THE SPT COMPLEX</scope>
    <scope>INTERACTION WITH SPTLC1</scope>
</reference>
<reference key="5">
    <citation type="journal article" date="2013" name="Genes Cells">
        <title>Identification of small subunit of serine palmitoyltransferase a as a lysophosphatidylinositol acyltransferase 1-interacting protein.</title>
        <authorList>
            <person name="Hirata Y."/>
            <person name="Yamamori N."/>
            <person name="Kono N."/>
            <person name="Lee H.C."/>
            <person name="Inoue T."/>
            <person name="Arai H."/>
        </authorList>
    </citation>
    <scope>FUNCTION</scope>
    <scope>SUBCELLULAR LOCATION</scope>
    <scope>INTERACTION WITH MBOAT7</scope>
</reference>
<reference evidence="14 15 16 17 18 19 20 21 22" key="6">
    <citation type="journal article" date="2021" name="Nat. Struct. Mol. Biol.">
        <title>Structural insights into the regulation of human serine palmitoyltransferase complexes.</title>
        <authorList>
            <person name="Wang Y."/>
            <person name="Niu Y."/>
            <person name="Zhang Z."/>
            <person name="Gable K."/>
            <person name="Gupta S.D."/>
            <person name="Somashekarappa N."/>
            <person name="Han G."/>
            <person name="Zhao H."/>
            <person name="Myasnikov A.G."/>
            <person name="Kalathur R.C."/>
            <person name="Dunn T.M."/>
            <person name="Lee C.H."/>
        </authorList>
    </citation>
    <scope>STRUCTURE BY ELECTRON MICROSCOPY (2.60 ANGSTROMS) IN COMPLEX WITH SPTLC1; SPTLC2 AND ORMDL3</scope>
    <scope>FUNCTION</scope>
</reference>
<reference evidence="10 11 12 13" key="7">
    <citation type="journal article" date="2021" name="Nat. Struct. Mol. Biol.">
        <title>Structural insights into the assembly and substrate selectivity of human SPT-ORMDL3 complex.</title>
        <authorList>
            <person name="Li S."/>
            <person name="Xie T."/>
            <person name="Liu P."/>
            <person name="Wang L."/>
            <person name="Gong X."/>
        </authorList>
    </citation>
    <scope>STRUCTURE BY ELECTRON MICROSCOPY (3.20 ANGSTROMS) IN COMPLEX WITH SPTLC1; SPTLC2 AND ORMDL3</scope>
    <scope>MUTAGENESIS OF MET-28</scope>
</reference>
<reference evidence="23 24 25 26" key="8">
    <citation type="journal article" date="2023" name="Nat. Commun.">
        <title>Ceramide sensing by human SPT-ORMDL complex for establishing sphingolipid homeostasis.</title>
        <authorList>
            <person name="Xie T."/>
            <person name="Liu P."/>
            <person name="Wu X."/>
            <person name="Dong F."/>
            <person name="Zhang Z."/>
            <person name="Yue J."/>
            <person name="Mahawar U."/>
            <person name="Farooq F."/>
            <person name="Vohra H."/>
            <person name="Fang Q."/>
            <person name="Liu W."/>
            <person name="Wattenberg B.W."/>
            <person name="Gong X."/>
        </authorList>
    </citation>
    <scope>STRUCTURE BY ELECTRON MICROSCOPY (2.70 ANGSTROMS) IN COMPLEX WITH SPTLC1; SPTLC2 AND ORMDL3</scope>
</reference>
<reference key="9">
    <citation type="journal article" date="2023" name="Brain">
        <title>SPTSSA variants alter sphingolipid synthesis and cause a complex hereditary spastic paraplegia.</title>
        <authorList>
            <consortium name="Undiagnosed Disease Network"/>
            <person name="Srivastava S."/>
            <person name="Shaked H.M."/>
            <person name="Gable K."/>
            <person name="Gupta S.D."/>
            <person name="Pan X."/>
            <person name="Somashekarappa N."/>
            <person name="Han G."/>
            <person name="Mohassel P."/>
            <person name="Gotkine M."/>
            <person name="Doney E."/>
            <person name="Goldenberg P."/>
            <person name="Tan Q.K.G."/>
            <person name="Gong Y."/>
            <person name="Kleinstiver B."/>
            <person name="Wishart B."/>
            <person name="Cope H."/>
            <person name="Pires C.B."/>
            <person name="Stutzman H."/>
            <person name="Spillmann R.C."/>
            <person name="Sadjadi R."/>
            <person name="Elpeleg O."/>
            <person name="Lee C.H."/>
            <person name="Bellen H.J."/>
            <person name="Edvardson S."/>
            <person name="Eichler F."/>
            <person name="Dunn T.M."/>
        </authorList>
    </citation>
    <scope>VARIANT SPG90A ILE-51</scope>
    <scope>INVOLVEMENT IN SPG90A AND SPG90B</scope>
    <scope>CHARACTERIZATION OF VARIANT SPG90A ILE-51</scope>
    <scope>MUTAGENESIS OF HIS-59</scope>
</reference>